<keyword id="KW-0067">ATP-binding</keyword>
<keyword id="KW-0436">Ligase</keyword>
<keyword id="KW-0460">Magnesium</keyword>
<keyword id="KW-0464">Manganese</keyword>
<keyword id="KW-0479">Metal-binding</keyword>
<keyword id="KW-0547">Nucleotide-binding</keyword>
<keyword id="KW-0648">Protein biosynthesis</keyword>
<proteinExistence type="inferred from homology"/>
<evidence type="ECO:0000255" key="1">
    <source>
        <dbReference type="HAMAP-Rule" id="MF_01552"/>
    </source>
</evidence>
<gene>
    <name evidence="1" type="primary">rimK</name>
    <name type="ordered locus">Maqu_2353</name>
</gene>
<reference key="1">
    <citation type="journal article" date="2011" name="Appl. Environ. Microbiol.">
        <title>Genomic potential of Marinobacter aquaeolei, a biogeochemical 'opportunitroph'.</title>
        <authorList>
            <person name="Singer E."/>
            <person name="Webb E.A."/>
            <person name="Nelson W.C."/>
            <person name="Heidelberg J.F."/>
            <person name="Ivanova N."/>
            <person name="Pati A."/>
            <person name="Edwards K.J."/>
        </authorList>
    </citation>
    <scope>NUCLEOTIDE SEQUENCE [LARGE SCALE GENOMIC DNA]</scope>
    <source>
        <strain>ATCC 700491 / DSM 11845 / VT8</strain>
    </source>
</reference>
<comment type="cofactor">
    <cofactor evidence="1">
        <name>Mg(2+)</name>
        <dbReference type="ChEBI" id="CHEBI:18420"/>
    </cofactor>
    <cofactor evidence="1">
        <name>Mn(2+)</name>
        <dbReference type="ChEBI" id="CHEBI:29035"/>
    </cofactor>
    <text evidence="1">Binds 2 magnesium or manganese ions per subunit.</text>
</comment>
<comment type="similarity">
    <text evidence="1">Belongs to the RimK family.</text>
</comment>
<name>RIMK_MARN8</name>
<accession>A1U360</accession>
<sequence length="301" mass="32832">MKIAVLSRNRHLYSTRRLVEEGINRGHEVKVIDCLHCSMNITSADPKIHYHEEVLEDFDVVIPRIGASVTFYGTAVLRQFEMMGVFPVNESVAITRSRDKLRSLQLLARKGVGMPVTGFANKPDNVPELLKMVGGAPVVIKLLQGTQGIGVVLAETRKAAESVIEAFMGLKADILVQEFIKEAGGADIRCFVIGDKVIAAMKRQGAEGEFRSNLHRGGTASLVRITPEERRTAITAAKAMGLNVAGVDLLRSSRGPLVMEVNSSPGLEGIENATGKNVAGMIINWTEKNYKPWKTKTRGRG</sequence>
<protein>
    <recommendedName>
        <fullName evidence="1">Probable alpha-L-glutamate ligase</fullName>
        <ecNumber evidence="1">6.3.2.-</ecNumber>
    </recommendedName>
</protein>
<feature type="chain" id="PRO_1000068845" description="Probable alpha-L-glutamate ligase">
    <location>
        <begin position="1"/>
        <end position="301"/>
    </location>
</feature>
<feature type="domain" description="ATP-grasp" evidence="1">
    <location>
        <begin position="104"/>
        <end position="287"/>
    </location>
</feature>
<feature type="binding site" evidence="1">
    <location>
        <position position="141"/>
    </location>
    <ligand>
        <name>ATP</name>
        <dbReference type="ChEBI" id="CHEBI:30616"/>
    </ligand>
</feature>
<feature type="binding site" evidence="1">
    <location>
        <begin position="178"/>
        <end position="179"/>
    </location>
    <ligand>
        <name>ATP</name>
        <dbReference type="ChEBI" id="CHEBI:30616"/>
    </ligand>
</feature>
<feature type="binding site" evidence="1">
    <location>
        <position position="187"/>
    </location>
    <ligand>
        <name>ATP</name>
        <dbReference type="ChEBI" id="CHEBI:30616"/>
    </ligand>
</feature>
<feature type="binding site" evidence="1">
    <location>
        <begin position="211"/>
        <end position="213"/>
    </location>
    <ligand>
        <name>ATP</name>
        <dbReference type="ChEBI" id="CHEBI:30616"/>
    </ligand>
</feature>
<feature type="binding site" evidence="1">
    <location>
        <position position="248"/>
    </location>
    <ligand>
        <name>Mg(2+)</name>
        <dbReference type="ChEBI" id="CHEBI:18420"/>
        <label>1</label>
    </ligand>
</feature>
<feature type="binding site" evidence="1">
    <location>
        <position position="248"/>
    </location>
    <ligand>
        <name>Mn(2+)</name>
        <dbReference type="ChEBI" id="CHEBI:29035"/>
        <label>1</label>
    </ligand>
</feature>
<feature type="binding site" evidence="1">
    <location>
        <position position="260"/>
    </location>
    <ligand>
        <name>Mg(2+)</name>
        <dbReference type="ChEBI" id="CHEBI:18420"/>
        <label>1</label>
    </ligand>
</feature>
<feature type="binding site" evidence="1">
    <location>
        <position position="260"/>
    </location>
    <ligand>
        <name>Mg(2+)</name>
        <dbReference type="ChEBI" id="CHEBI:18420"/>
        <label>2</label>
    </ligand>
</feature>
<feature type="binding site" evidence="1">
    <location>
        <position position="260"/>
    </location>
    <ligand>
        <name>Mn(2+)</name>
        <dbReference type="ChEBI" id="CHEBI:29035"/>
        <label>1</label>
    </ligand>
</feature>
<feature type="binding site" evidence="1">
    <location>
        <position position="260"/>
    </location>
    <ligand>
        <name>Mn(2+)</name>
        <dbReference type="ChEBI" id="CHEBI:29035"/>
        <label>2</label>
    </ligand>
</feature>
<feature type="binding site" evidence="1">
    <location>
        <position position="262"/>
    </location>
    <ligand>
        <name>Mg(2+)</name>
        <dbReference type="ChEBI" id="CHEBI:18420"/>
        <label>2</label>
    </ligand>
</feature>
<feature type="binding site" evidence="1">
    <location>
        <position position="262"/>
    </location>
    <ligand>
        <name>Mn(2+)</name>
        <dbReference type="ChEBI" id="CHEBI:29035"/>
        <label>2</label>
    </ligand>
</feature>
<dbReference type="EC" id="6.3.2.-" evidence="1"/>
<dbReference type="EMBL" id="CP000514">
    <property type="protein sequence ID" value="ABM19429.1"/>
    <property type="molecule type" value="Genomic_DNA"/>
</dbReference>
<dbReference type="RefSeq" id="WP_011785816.1">
    <property type="nucleotide sequence ID" value="NC_008740.1"/>
</dbReference>
<dbReference type="SMR" id="A1U360"/>
<dbReference type="STRING" id="351348.Maqu_2353"/>
<dbReference type="GeneID" id="31820387"/>
<dbReference type="KEGG" id="maq:Maqu_2353"/>
<dbReference type="eggNOG" id="COG0189">
    <property type="taxonomic scope" value="Bacteria"/>
</dbReference>
<dbReference type="HOGENOM" id="CLU_054353_0_1_6"/>
<dbReference type="OrthoDB" id="3865600at2"/>
<dbReference type="Proteomes" id="UP000000998">
    <property type="component" value="Chromosome"/>
</dbReference>
<dbReference type="GO" id="GO:0005737">
    <property type="term" value="C:cytoplasm"/>
    <property type="evidence" value="ECO:0007669"/>
    <property type="project" value="TreeGrafter"/>
</dbReference>
<dbReference type="GO" id="GO:0005524">
    <property type="term" value="F:ATP binding"/>
    <property type="evidence" value="ECO:0007669"/>
    <property type="project" value="UniProtKB-UniRule"/>
</dbReference>
<dbReference type="GO" id="GO:0046872">
    <property type="term" value="F:metal ion binding"/>
    <property type="evidence" value="ECO:0007669"/>
    <property type="project" value="UniProtKB-KW"/>
</dbReference>
<dbReference type="GO" id="GO:0018169">
    <property type="term" value="F:ribosomal S6-glutamic acid ligase activity"/>
    <property type="evidence" value="ECO:0007669"/>
    <property type="project" value="TreeGrafter"/>
</dbReference>
<dbReference type="GO" id="GO:0036211">
    <property type="term" value="P:protein modification process"/>
    <property type="evidence" value="ECO:0007669"/>
    <property type="project" value="InterPro"/>
</dbReference>
<dbReference type="GO" id="GO:0009432">
    <property type="term" value="P:SOS response"/>
    <property type="evidence" value="ECO:0007669"/>
    <property type="project" value="TreeGrafter"/>
</dbReference>
<dbReference type="GO" id="GO:0006412">
    <property type="term" value="P:translation"/>
    <property type="evidence" value="ECO:0007669"/>
    <property type="project" value="UniProtKB-KW"/>
</dbReference>
<dbReference type="FunFam" id="3.40.50.20:FF:000004">
    <property type="entry name" value="Probable alpha-L-glutamate ligase"/>
    <property type="match status" value="1"/>
</dbReference>
<dbReference type="FunFam" id="3.30.1490.20:FF:000005">
    <property type="entry name" value="Probable alpha-L-glutamate ligase 1"/>
    <property type="match status" value="1"/>
</dbReference>
<dbReference type="FunFam" id="3.30.470.20:FF:000016">
    <property type="entry name" value="Ribosomal protein S6--L-glutamate ligase"/>
    <property type="match status" value="1"/>
</dbReference>
<dbReference type="Gene3D" id="3.40.50.20">
    <property type="match status" value="1"/>
</dbReference>
<dbReference type="Gene3D" id="3.30.1490.20">
    <property type="entry name" value="ATP-grasp fold, A domain"/>
    <property type="match status" value="1"/>
</dbReference>
<dbReference type="Gene3D" id="3.30.470.20">
    <property type="entry name" value="ATP-grasp fold, B domain"/>
    <property type="match status" value="1"/>
</dbReference>
<dbReference type="HAMAP" id="MF_01552">
    <property type="entry name" value="RimK"/>
    <property type="match status" value="1"/>
</dbReference>
<dbReference type="InterPro" id="IPR011761">
    <property type="entry name" value="ATP-grasp"/>
</dbReference>
<dbReference type="InterPro" id="IPR013651">
    <property type="entry name" value="ATP-grasp_RimK-type"/>
</dbReference>
<dbReference type="InterPro" id="IPR013815">
    <property type="entry name" value="ATP_grasp_subdomain_1"/>
</dbReference>
<dbReference type="InterPro" id="IPR023533">
    <property type="entry name" value="RimK"/>
</dbReference>
<dbReference type="InterPro" id="IPR041107">
    <property type="entry name" value="Rimk_N"/>
</dbReference>
<dbReference type="InterPro" id="IPR004666">
    <property type="entry name" value="Rp_bS6_RimK/Lys_biosynth_LsyX"/>
</dbReference>
<dbReference type="NCBIfam" id="NF007764">
    <property type="entry name" value="PRK10446.1"/>
    <property type="match status" value="1"/>
</dbReference>
<dbReference type="NCBIfam" id="TIGR00768">
    <property type="entry name" value="rimK_fam"/>
    <property type="match status" value="1"/>
</dbReference>
<dbReference type="PANTHER" id="PTHR21621:SF7">
    <property type="entry name" value="RIBOSOMAL PROTEIN BS6--L-GLUTAMATE LIGASE"/>
    <property type="match status" value="1"/>
</dbReference>
<dbReference type="PANTHER" id="PTHR21621">
    <property type="entry name" value="RIBOSOMAL PROTEIN S6 MODIFICATION PROTEIN"/>
    <property type="match status" value="1"/>
</dbReference>
<dbReference type="Pfam" id="PF08443">
    <property type="entry name" value="RimK"/>
    <property type="match status" value="1"/>
</dbReference>
<dbReference type="Pfam" id="PF18030">
    <property type="entry name" value="Rimk_N"/>
    <property type="match status" value="1"/>
</dbReference>
<dbReference type="SUPFAM" id="SSF56059">
    <property type="entry name" value="Glutathione synthetase ATP-binding domain-like"/>
    <property type="match status" value="1"/>
</dbReference>
<dbReference type="PROSITE" id="PS50975">
    <property type="entry name" value="ATP_GRASP"/>
    <property type="match status" value="1"/>
</dbReference>
<organism>
    <name type="scientific">Marinobacter nauticus (strain ATCC 700491 / DSM 11845 / VT8)</name>
    <name type="common">Marinobacter aquaeolei</name>
    <dbReference type="NCBI Taxonomy" id="351348"/>
    <lineage>
        <taxon>Bacteria</taxon>
        <taxon>Pseudomonadati</taxon>
        <taxon>Pseudomonadota</taxon>
        <taxon>Gammaproteobacteria</taxon>
        <taxon>Pseudomonadales</taxon>
        <taxon>Marinobacteraceae</taxon>
        <taxon>Marinobacter</taxon>
    </lineage>
</organism>